<keyword id="KW-0067">ATP-binding</keyword>
<keyword id="KW-0963">Cytoplasm</keyword>
<keyword id="KW-0903">Direct protein sequencing</keyword>
<keyword id="KW-0227">DNA damage</keyword>
<keyword id="KW-1017">Isopeptide bond</keyword>
<keyword id="KW-0418">Kinase</keyword>
<keyword id="KW-0547">Nucleotide-binding</keyword>
<keyword id="KW-0539">Nucleus</keyword>
<keyword id="KW-0597">Phosphoprotein</keyword>
<keyword id="KW-1185">Reference proteome</keyword>
<keyword id="KW-0723">Serine/threonine-protein kinase</keyword>
<keyword id="KW-0808">Transferase</keyword>
<keyword id="KW-0832">Ubl conjugation</keyword>
<sequence length="366" mass="42124">PPPPPPQQFPQFHVRSGLQIKKNAIIDDYKVTSQVLGLGINGKVLQIFSKKTQEKFALKMLQDCPKARREVELHWRASQCPHIVRIVDVYENLYAGRKCLLIVMECLDGGELFSRIQDRGDQAFTEREASEIMKSIGEAIQYLHSINIAHRDVKPENLLYTSKRPKAILKLTDFGFAKETTSHNSLTTPCYTPYYVAPEVLGPEKYDKSCDMWSLGVIMYILLCGYPPFYSNHGLAISPGMKTRIRMGQYEFPNPEWSEVSEEVKMLIRNLLKTEPTQRMTITEFMNHPWIMQSTKVPQTPLHTSRVLKEDKERWEDVKEEMTSALATMRVDYEQIKIKKIEDASNPLLLKRRKKARALEAAALAH</sequence>
<protein>
    <recommendedName>
        <fullName>MAP kinase-activated protein kinase 2</fullName>
        <shortName>MAPK-activated protein kinase 2</shortName>
        <shortName>MAPKAP kinase 2</shortName>
        <shortName>MAPKAP-K2</shortName>
        <shortName>MAPKAPK-2</shortName>
        <shortName>MK-2</shortName>
        <shortName>MK2</shortName>
        <ecNumber>2.7.11.1</ecNumber>
    </recommendedName>
</protein>
<organism>
    <name type="scientific">Oryctolagus cuniculus</name>
    <name type="common">Rabbit</name>
    <dbReference type="NCBI Taxonomy" id="9986"/>
    <lineage>
        <taxon>Eukaryota</taxon>
        <taxon>Metazoa</taxon>
        <taxon>Chordata</taxon>
        <taxon>Craniata</taxon>
        <taxon>Vertebrata</taxon>
        <taxon>Euteleostomi</taxon>
        <taxon>Mammalia</taxon>
        <taxon>Eutheria</taxon>
        <taxon>Euarchontoglires</taxon>
        <taxon>Glires</taxon>
        <taxon>Lagomorpha</taxon>
        <taxon>Leporidae</taxon>
        <taxon>Oryctolagus</taxon>
    </lineage>
</organism>
<evidence type="ECO:0000250" key="1"/>
<evidence type="ECO:0000250" key="2">
    <source>
        <dbReference type="UniProtKB" id="P49137"/>
    </source>
</evidence>
<evidence type="ECO:0000255" key="3">
    <source>
        <dbReference type="PROSITE-ProRule" id="PRU00159"/>
    </source>
</evidence>
<evidence type="ECO:0000255" key="4">
    <source>
        <dbReference type="PROSITE-ProRule" id="PRU10027"/>
    </source>
</evidence>
<evidence type="ECO:0000269" key="5">
    <source>
    </source>
</evidence>
<evidence type="ECO:0000269" key="6">
    <source>
    </source>
</evidence>
<evidence type="ECO:0000305" key="7"/>
<evidence type="ECO:0000305" key="8">
    <source>
    </source>
</evidence>
<dbReference type="EC" id="2.7.11.1"/>
<dbReference type="EMBL" id="X75345">
    <property type="protein sequence ID" value="CAA53093.1"/>
    <property type="molecule type" value="mRNA"/>
</dbReference>
<dbReference type="EMBL" id="AAGW02025411">
    <property type="status" value="NOT_ANNOTATED_CDS"/>
    <property type="molecule type" value="Genomic_DNA"/>
</dbReference>
<dbReference type="PIR" id="S39794">
    <property type="entry name" value="S39794"/>
</dbReference>
<dbReference type="BMRB" id="P49139"/>
<dbReference type="SMR" id="P49139"/>
<dbReference type="FunCoup" id="P49139">
    <property type="interactions" value="998"/>
</dbReference>
<dbReference type="STRING" id="9986.ENSOCUP00000012250"/>
<dbReference type="iPTMnet" id="P49139"/>
<dbReference type="PaxDb" id="9986-ENSOCUP00000012250"/>
<dbReference type="eggNOG" id="KOG0604">
    <property type="taxonomic scope" value="Eukaryota"/>
</dbReference>
<dbReference type="InParanoid" id="P49139"/>
<dbReference type="Proteomes" id="UP000001811">
    <property type="component" value="Unplaced"/>
</dbReference>
<dbReference type="GO" id="GO:0005737">
    <property type="term" value="C:cytoplasm"/>
    <property type="evidence" value="ECO:0000250"/>
    <property type="project" value="UniProtKB"/>
</dbReference>
<dbReference type="GO" id="GO:0005634">
    <property type="term" value="C:nucleus"/>
    <property type="evidence" value="ECO:0000250"/>
    <property type="project" value="UniProtKB"/>
</dbReference>
<dbReference type="GO" id="GO:0005524">
    <property type="term" value="F:ATP binding"/>
    <property type="evidence" value="ECO:0007669"/>
    <property type="project" value="UniProtKB-KW"/>
</dbReference>
<dbReference type="GO" id="GO:0106310">
    <property type="term" value="F:protein serine kinase activity"/>
    <property type="evidence" value="ECO:0007669"/>
    <property type="project" value="RHEA"/>
</dbReference>
<dbReference type="GO" id="GO:0004674">
    <property type="term" value="F:protein serine/threonine kinase activity"/>
    <property type="evidence" value="ECO:0000250"/>
    <property type="project" value="UniProtKB"/>
</dbReference>
<dbReference type="GO" id="GO:0070935">
    <property type="term" value="P:3'-UTR-mediated mRNA stabilization"/>
    <property type="evidence" value="ECO:0000250"/>
    <property type="project" value="UniProtKB"/>
</dbReference>
<dbReference type="GO" id="GO:0006974">
    <property type="term" value="P:DNA damage response"/>
    <property type="evidence" value="ECO:0000250"/>
    <property type="project" value="UniProtKB"/>
</dbReference>
<dbReference type="GO" id="GO:0006954">
    <property type="term" value="P:inflammatory response"/>
    <property type="evidence" value="ECO:0000250"/>
    <property type="project" value="UniProtKB"/>
</dbReference>
<dbReference type="GO" id="GO:0044351">
    <property type="term" value="P:macropinocytosis"/>
    <property type="evidence" value="ECO:0000250"/>
    <property type="project" value="UniProtKB"/>
</dbReference>
<dbReference type="GO" id="GO:0032675">
    <property type="term" value="P:regulation of interleukin-6 production"/>
    <property type="evidence" value="ECO:0000250"/>
    <property type="project" value="UniProtKB"/>
</dbReference>
<dbReference type="GO" id="GO:0032680">
    <property type="term" value="P:regulation of tumor necrosis factor production"/>
    <property type="evidence" value="ECO:0000250"/>
    <property type="project" value="UniProtKB"/>
</dbReference>
<dbReference type="GO" id="GO:0034097">
    <property type="term" value="P:response to cytokine"/>
    <property type="evidence" value="ECO:0000250"/>
    <property type="project" value="UniProtKB"/>
</dbReference>
<dbReference type="GO" id="GO:0032496">
    <property type="term" value="P:response to lipopolysaccharide"/>
    <property type="evidence" value="ECO:0000250"/>
    <property type="project" value="UniProtKB"/>
</dbReference>
<dbReference type="GO" id="GO:0002224">
    <property type="term" value="P:toll-like receptor signaling pathway"/>
    <property type="evidence" value="ECO:0000250"/>
    <property type="project" value="UniProtKB"/>
</dbReference>
<dbReference type="CDD" id="cd14170">
    <property type="entry name" value="STKc_MAPKAPK2"/>
    <property type="match status" value="1"/>
</dbReference>
<dbReference type="FunFam" id="1.10.510.10:FF:000094">
    <property type="entry name" value="MAP kinase-activated protein kinase 2"/>
    <property type="match status" value="1"/>
</dbReference>
<dbReference type="FunFam" id="3.30.200.20:FF:000156">
    <property type="entry name" value="MAP kinase-activated protein kinase 3"/>
    <property type="match status" value="1"/>
</dbReference>
<dbReference type="FunFam" id="4.10.1170.10:FF:000001">
    <property type="entry name" value="MAP kinase-activated protein kinase 3"/>
    <property type="match status" value="1"/>
</dbReference>
<dbReference type="Gene3D" id="4.10.1170.10">
    <property type="entry name" value="MAP kinase activated protein kinase 2"/>
    <property type="match status" value="1"/>
</dbReference>
<dbReference type="Gene3D" id="3.30.200.20">
    <property type="entry name" value="Phosphorylase Kinase, domain 1"/>
    <property type="match status" value="1"/>
</dbReference>
<dbReference type="Gene3D" id="1.10.510.10">
    <property type="entry name" value="Transferase(Phosphotransferase) domain 1"/>
    <property type="match status" value="1"/>
</dbReference>
<dbReference type="InterPro" id="IPR011009">
    <property type="entry name" value="Kinase-like_dom_sf"/>
</dbReference>
<dbReference type="InterPro" id="IPR027442">
    <property type="entry name" value="MAPKAPK_C"/>
</dbReference>
<dbReference type="InterPro" id="IPR000719">
    <property type="entry name" value="Prot_kinase_dom"/>
</dbReference>
<dbReference type="InterPro" id="IPR017441">
    <property type="entry name" value="Protein_kinase_ATP_BS"/>
</dbReference>
<dbReference type="InterPro" id="IPR008271">
    <property type="entry name" value="Ser/Thr_kinase_AS"/>
</dbReference>
<dbReference type="PANTHER" id="PTHR24347">
    <property type="entry name" value="SERINE/THREONINE-PROTEIN KINASE"/>
    <property type="match status" value="1"/>
</dbReference>
<dbReference type="Pfam" id="PF00069">
    <property type="entry name" value="Pkinase"/>
    <property type="match status" value="1"/>
</dbReference>
<dbReference type="SMART" id="SM00220">
    <property type="entry name" value="S_TKc"/>
    <property type="match status" value="1"/>
</dbReference>
<dbReference type="SUPFAM" id="SSF56112">
    <property type="entry name" value="Protein kinase-like (PK-like)"/>
    <property type="match status" value="1"/>
</dbReference>
<dbReference type="PROSITE" id="PS00107">
    <property type="entry name" value="PROTEIN_KINASE_ATP"/>
    <property type="match status" value="1"/>
</dbReference>
<dbReference type="PROSITE" id="PS50011">
    <property type="entry name" value="PROTEIN_KINASE_DOM"/>
    <property type="match status" value="1"/>
</dbReference>
<dbReference type="PROSITE" id="PS00108">
    <property type="entry name" value="PROTEIN_KINASE_ST"/>
    <property type="match status" value="1"/>
</dbReference>
<comment type="function">
    <text evidence="2 5 6">Stress-activated serine/threonine-protein kinase involved in cytokine production, endocytosis, reorganization of the cytoskeleton, cell migration, cell cycle control, chromatin remodeling, DNA damage response and transcriptional regulation. Following stress, it is phosphorylated and activated by MAP kinase p38-alpha/MAPK14, leading to phosphorylation of substrates. Phosphorylates serine in the peptide sequence, Hyd-X-R-X(2)-S, where Hyd is a large hydrophobic residue. Phosphorylates ALOX5, CDC25B, CDC25C, CEP131, ELAVL1, HNRNPA0, HSP27/HSPB1, KRT18, KRT20, LIMK1, LSP1, PABPC1, PARN, PDE4A, RCSD1, RPS6KA3, TAB3 and TTP/ZFP36. Phosphorylates HSF1; leading to the interaction with HSP90 proteins and inhibiting HSF1 homotrimerization, DNA-binding and transactivation activities (By similarity). Mediates phosphorylation of HSP27/HSPB1 in response to stress, leading to dissociation of HSP27/HSPB1 from large small heat-shock protein (sHsps) oligomers and impairment of their chaperone activities and ability to protect against oxidative stress effectively. Involved in inflammatory response by regulating tumor necrosis factor (TNF) and IL6 production post-transcriptionally: acts by phosphorylating AU-rich elements (AREs)-binding proteins ELAVL1, HNRNPA0, PABPC1 and TTP/ZFP36, leading to regulate the stability and translation of TNF and IL6 mRNAs. Phosphorylation of TTP/ZFP36, a major post-transcriptional regulator of TNF, promotes its binding to 14-3-3 proteins and reduces its ARE mRNA affinity leading to inhibition of dependent degradation of ARE-containing transcripts. Phosphorylates CEP131 in response to cellular stress following ultraviolet irradiation which promotes binding of CEP131 to 14-3-3 proteins and inhibits formation of novel centriolar satellites (By similarity). Also involved in late G2/M checkpoint following DNA damage through a process of post-transcriptional mRNA stabilization: following DNA damage, relocalizes from nucleus to cytoplasm and phosphorylates HNRNPA0 and PARN, leading to stabilization of GADD45A mRNA. Involved in toll-like receptor signaling pathway (TLR) in dendritic cells: required for acute TLR-induced macropinocytosis by phosphorylating and activating RPS6KA3.</text>
</comment>
<comment type="catalytic activity">
    <reaction>
        <text>L-seryl-[protein] + ATP = O-phospho-L-seryl-[protein] + ADP + H(+)</text>
        <dbReference type="Rhea" id="RHEA:17989"/>
        <dbReference type="Rhea" id="RHEA-COMP:9863"/>
        <dbReference type="Rhea" id="RHEA-COMP:11604"/>
        <dbReference type="ChEBI" id="CHEBI:15378"/>
        <dbReference type="ChEBI" id="CHEBI:29999"/>
        <dbReference type="ChEBI" id="CHEBI:30616"/>
        <dbReference type="ChEBI" id="CHEBI:83421"/>
        <dbReference type="ChEBI" id="CHEBI:456216"/>
        <dbReference type="EC" id="2.7.11.1"/>
    </reaction>
</comment>
<comment type="catalytic activity">
    <reaction>
        <text>L-threonyl-[protein] + ATP = O-phospho-L-threonyl-[protein] + ADP + H(+)</text>
        <dbReference type="Rhea" id="RHEA:46608"/>
        <dbReference type="Rhea" id="RHEA-COMP:11060"/>
        <dbReference type="Rhea" id="RHEA-COMP:11605"/>
        <dbReference type="ChEBI" id="CHEBI:15378"/>
        <dbReference type="ChEBI" id="CHEBI:30013"/>
        <dbReference type="ChEBI" id="CHEBI:30616"/>
        <dbReference type="ChEBI" id="CHEBI:61977"/>
        <dbReference type="ChEBI" id="CHEBI:456216"/>
        <dbReference type="EC" id="2.7.11.1"/>
    </reaction>
</comment>
<comment type="activity regulation">
    <text evidence="1">Activated following phosphorylation by p38-alpha/MAPK14 following various stresses. Inhibited following sumoylation. Specifically inhibited by pyrrolopyridine inhibitors (By similarity).</text>
</comment>
<comment type="subunit">
    <text evidence="2">Heterodimer with p38-alpha/MAPK14; this heterodimer forms a stable complex: molecules are positioned 'face to face' so that the ATP-binding sites of both kinases are at the heterodimer interface. Interacts with PHC2. Interacts with HSF1.</text>
</comment>
<comment type="subcellular location">
    <subcellularLocation>
        <location evidence="2">Cytoplasm</location>
    </subcellularLocation>
    <subcellularLocation>
        <location evidence="2">Nucleus</location>
    </subcellularLocation>
    <text evidence="2">Phosphorylation and subsequent activation releases the autoinhibitory helix, resulting in the export from the nucleus into the cytoplasm.</text>
</comment>
<comment type="PTM">
    <text evidence="2">Sumoylation inhibits the protein kinase activity.</text>
</comment>
<comment type="PTM">
    <text evidence="8">Phosphorylated and activated by MAP kinase p38-alpha/MAPK14 at Thr-188, Ser-238 and Thr-300.</text>
</comment>
<comment type="similarity">
    <text evidence="7">Belongs to the protein kinase superfamily. CAMK Ser/Thr protein kinase family.</text>
</comment>
<feature type="chain" id="PRO_0000086290" description="MAP kinase-activated protein kinase 2">
    <location>
        <begin position="1" status="less than"/>
        <end position="366"/>
    </location>
</feature>
<feature type="domain" description="Protein kinase" evidence="3">
    <location>
        <begin position="30"/>
        <end position="291"/>
    </location>
</feature>
<feature type="region of interest" description="Autoinhibitory helix" evidence="1">
    <location>
        <begin position="294"/>
        <end position="330"/>
    </location>
</feature>
<feature type="region of interest" description="p38 MAPK-binding site" evidence="1">
    <location>
        <begin position="332"/>
        <end position="356"/>
    </location>
</feature>
<feature type="short sequence motif" description="Nuclear export signal (NES)" evidence="1">
    <location>
        <begin position="322"/>
        <end position="331"/>
    </location>
</feature>
<feature type="short sequence motif" description="Bipartite nuclear localization signal 1" evidence="1">
    <location>
        <begin position="337"/>
        <end position="340"/>
    </location>
</feature>
<feature type="short sequence motif" description="Bipartite nuclear localization signal 2" evidence="1">
    <location>
        <begin position="351"/>
        <end position="355"/>
    </location>
</feature>
<feature type="active site" description="Proton acceptor" evidence="3 4">
    <location>
        <position position="152"/>
    </location>
</feature>
<feature type="binding site" evidence="3">
    <location>
        <begin position="36"/>
        <end position="44"/>
    </location>
    <ligand>
        <name>ATP</name>
        <dbReference type="ChEBI" id="CHEBI:30616"/>
    </ligand>
</feature>
<feature type="binding site" evidence="3">
    <location>
        <position position="59"/>
    </location>
    <ligand>
        <name>ATP</name>
        <dbReference type="ChEBI" id="CHEBI:30616"/>
    </ligand>
</feature>
<feature type="binding site" evidence="1">
    <location>
        <begin position="105"/>
        <end position="107"/>
    </location>
    <ligand>
        <name>staurosporine</name>
        <dbReference type="ChEBI" id="CHEBI:57491"/>
    </ligand>
</feature>
<feature type="modified residue" description="Phosphothreonine; by MAPK14" evidence="2">
    <location>
        <position position="188"/>
    </location>
</feature>
<feature type="modified residue" description="Phosphoserine; by MAPK14" evidence="2">
    <location>
        <position position="238"/>
    </location>
</feature>
<feature type="modified residue" description="Phosphoserine; by autocatalysis" evidence="1">
    <location>
        <position position="294"/>
    </location>
</feature>
<feature type="modified residue" description="Phosphothreonine; by MAPK14" evidence="5">
    <location>
        <position position="300"/>
    </location>
</feature>
<feature type="cross-link" description="Glycyl lysine isopeptide (Lys-Gly) (interchain with G-Cter in SUMO)" evidence="1">
    <location>
        <position position="319"/>
    </location>
</feature>
<feature type="sequence conflict" description="In Ref. 2; CAA53093." evidence="7" ref="2">
    <original>E</original>
    <variation>L</variation>
    <location>
        <position position="111"/>
    </location>
</feature>
<feature type="sequence conflict" description="In Ref. 4; AA sequence." evidence="7" ref="4">
    <original>W</original>
    <variation>G</variation>
    <location>
        <position position="315"/>
    </location>
</feature>
<feature type="non-terminal residue">
    <location>
        <position position="1"/>
    </location>
</feature>
<proteinExistence type="evidence at protein level"/>
<gene>
    <name type="primary">MAPKAPK2</name>
</gene>
<accession>P49139</accession>
<accession>G1T708</accession>
<reference key="1">
    <citation type="submission" date="2009-08" db="EMBL/GenBank/DDBJ databases">
        <title>Genome Sequence of Oryctolagus cuniculus (European rabbit).</title>
        <authorList>
            <consortium name="The Genome Sequencing Platform"/>
            <person name="Di Palma F."/>
            <person name="Heiman D."/>
            <person name="Young S."/>
            <person name="Gnerre S."/>
            <person name="Johnson J."/>
            <person name="Lander E.S."/>
            <person name="Lindblad-Toh K."/>
        </authorList>
    </citation>
    <scope>NUCLEOTIDE SEQUENCE [LARGE SCALE GENOMIC DNA]</scope>
    <source>
        <strain>Thorbecke</strain>
    </source>
</reference>
<reference key="2">
    <citation type="journal article" date="1993" name="Biochem. J.">
        <title>The substrate specificity and structure of mitogen-activated protein (MAP) kinase-activated protein kinase-2.</title>
        <authorList>
            <person name="Stokoe D."/>
            <person name="Caudwell B."/>
            <person name="Cohen P.T.W."/>
            <person name="Cohen P."/>
        </authorList>
    </citation>
    <scope>NUCLEOTIDE SEQUENCE [MRNA] OF 1-256</scope>
    <source>
        <strain>New Zealand white</strain>
        <tissue>Skeletal muscle</tissue>
    </source>
</reference>
<reference key="3">
    <citation type="journal article" date="1992" name="FEBS Lett.">
        <title>Identification of MAPKAP kinase 2 as a major enzyme responsible for the phosphorylation of the small mammalian heat shock proteins.</title>
        <authorList>
            <person name="Stokoe D."/>
            <person name="Engel K."/>
            <person name="Campbell D.G."/>
            <person name="Cohen P."/>
            <person name="Gaestel M."/>
        </authorList>
    </citation>
    <scope>FUNCTION IN PHOSPHORYLATION OF HSPB1</scope>
</reference>
<reference key="4">
    <citation type="journal article" date="1992" name="EMBO J.">
        <title>MAPKAP kinase-2; a novel protein kinase activated by mitogen-activated protein kinase.</title>
        <authorList>
            <person name="Stokoe D."/>
            <person name="Campbell D.G."/>
            <person name="Nakielny S."/>
            <person name="Hidaka H."/>
            <person name="Leevers S.J."/>
            <person name="Marshall C."/>
            <person name="Cohen P."/>
        </authorList>
    </citation>
    <scope>PARTIAL PROTEIN SEQUENCE</scope>
    <scope>FUNCTION</scope>
    <scope>PHOSPHORYLATION AT THR-300</scope>
    <source>
        <strain>New Zealand white</strain>
    </source>
</reference>
<name>MAPK2_RABIT</name>